<evidence type="ECO:0000305" key="1"/>
<comment type="similarity">
    <text evidence="1">Belongs to the UPF0473 family.</text>
</comment>
<accession>Q99TN4</accession>
<protein>
    <recommendedName>
        <fullName>UPF0473 protein SAV1615</fullName>
    </recommendedName>
</protein>
<feature type="chain" id="PRO_0000299291" description="UPF0473 protein SAV1615">
    <location>
        <begin position="1"/>
        <end position="102"/>
    </location>
</feature>
<dbReference type="EMBL" id="BA000017">
    <property type="protein sequence ID" value="BAB57777.1"/>
    <property type="molecule type" value="Genomic_DNA"/>
</dbReference>
<dbReference type="RefSeq" id="WP_000134779.1">
    <property type="nucleotide sequence ID" value="NC_002758.2"/>
</dbReference>
<dbReference type="KEGG" id="sav:SAV1615"/>
<dbReference type="HOGENOM" id="CLU_146610_2_1_9"/>
<dbReference type="PhylomeDB" id="Q99TN4"/>
<dbReference type="Proteomes" id="UP000002481">
    <property type="component" value="Chromosome"/>
</dbReference>
<dbReference type="HAMAP" id="MF_01448">
    <property type="entry name" value="UPF0473"/>
    <property type="match status" value="1"/>
</dbReference>
<dbReference type="InterPro" id="IPR009711">
    <property type="entry name" value="UPF0473"/>
</dbReference>
<dbReference type="NCBIfam" id="NF010214">
    <property type="entry name" value="PRK13678.1-1"/>
    <property type="match status" value="1"/>
</dbReference>
<dbReference type="PANTHER" id="PTHR40066">
    <property type="entry name" value="UPF0473 PROTEIN CBO2561/CLC_2432"/>
    <property type="match status" value="1"/>
</dbReference>
<dbReference type="PANTHER" id="PTHR40066:SF1">
    <property type="entry name" value="UPF0473 PROTEIN CBO2561_CLC_2432"/>
    <property type="match status" value="1"/>
</dbReference>
<dbReference type="Pfam" id="PF06949">
    <property type="entry name" value="DUF1292"/>
    <property type="match status" value="1"/>
</dbReference>
<gene>
    <name type="ordered locus">SAV1615</name>
</gene>
<proteinExistence type="inferred from homology"/>
<reference key="1">
    <citation type="journal article" date="2001" name="Lancet">
        <title>Whole genome sequencing of meticillin-resistant Staphylococcus aureus.</title>
        <authorList>
            <person name="Kuroda M."/>
            <person name="Ohta T."/>
            <person name="Uchiyama I."/>
            <person name="Baba T."/>
            <person name="Yuzawa H."/>
            <person name="Kobayashi I."/>
            <person name="Cui L."/>
            <person name="Oguchi A."/>
            <person name="Aoki K."/>
            <person name="Nagai Y."/>
            <person name="Lian J.-Q."/>
            <person name="Ito T."/>
            <person name="Kanamori M."/>
            <person name="Matsumaru H."/>
            <person name="Maruyama A."/>
            <person name="Murakami H."/>
            <person name="Hosoyama A."/>
            <person name="Mizutani-Ui Y."/>
            <person name="Takahashi N.K."/>
            <person name="Sawano T."/>
            <person name="Inoue R."/>
            <person name="Kaito C."/>
            <person name="Sekimizu K."/>
            <person name="Hirakawa H."/>
            <person name="Kuhara S."/>
            <person name="Goto S."/>
            <person name="Yabuzaki J."/>
            <person name="Kanehisa M."/>
            <person name="Yamashita A."/>
            <person name="Oshima K."/>
            <person name="Furuya K."/>
            <person name="Yoshino C."/>
            <person name="Shiba T."/>
            <person name="Hattori M."/>
            <person name="Ogasawara N."/>
            <person name="Hayashi H."/>
            <person name="Hiramatsu K."/>
        </authorList>
    </citation>
    <scope>NUCLEOTIDE SEQUENCE [LARGE SCALE GENOMIC DNA]</scope>
    <source>
        <strain>Mu50 / ATCC 700699</strain>
    </source>
</reference>
<name>Y1615_STAAM</name>
<sequence>MTEHNHDSQLEINNEEELLTLFDEEGNEVLYRKVLEFYHPEFKKEYVILAEEGAQSDEDDMIELVPMINEPDESGDGGKLVPIETDEEWDMIEEVVNTEMEE</sequence>
<organism>
    <name type="scientific">Staphylococcus aureus (strain Mu50 / ATCC 700699)</name>
    <dbReference type="NCBI Taxonomy" id="158878"/>
    <lineage>
        <taxon>Bacteria</taxon>
        <taxon>Bacillati</taxon>
        <taxon>Bacillota</taxon>
        <taxon>Bacilli</taxon>
        <taxon>Bacillales</taxon>
        <taxon>Staphylococcaceae</taxon>
        <taxon>Staphylococcus</taxon>
    </lineage>
</organism>